<proteinExistence type="evidence at protein level"/>
<accession>P07658</accession>
<accession>P78137</accession>
<accession>Q2M6M5</accession>
<protein>
    <recommendedName>
        <fullName>Formate dehydrogenase H</fullName>
        <ecNumber evidence="2 4 5">1.17.98.4</ecNumber>
    </recommendedName>
    <alternativeName>
        <fullName>Formate dehydrogenase-H subunit alpha</fullName>
        <shortName>FDH-H</shortName>
    </alternativeName>
    <alternativeName>
        <fullName>Formate-hydrogen-lyase-linked, selenocysteine-containing polypeptide</fullName>
    </alternativeName>
</protein>
<evidence type="ECO:0000255" key="1">
    <source>
        <dbReference type="PROSITE-ProRule" id="PRU01004"/>
    </source>
</evidence>
<evidence type="ECO:0000269" key="2">
    <source>
    </source>
</evidence>
<evidence type="ECO:0000269" key="3">
    <source>
    </source>
</evidence>
<evidence type="ECO:0000269" key="4">
    <source>
    </source>
</evidence>
<evidence type="ECO:0000269" key="5">
    <source>
    </source>
</evidence>
<evidence type="ECO:0000305" key="6"/>
<evidence type="ECO:0007744" key="7">
    <source>
        <dbReference type="PDB" id="1AA6"/>
    </source>
</evidence>
<evidence type="ECO:0007744" key="8">
    <source>
        <dbReference type="PDB" id="1FDI"/>
    </source>
</evidence>
<evidence type="ECO:0007744" key="9">
    <source>
        <dbReference type="PDB" id="1FDO"/>
    </source>
</evidence>
<evidence type="ECO:0007744" key="10">
    <source>
        <dbReference type="PDB" id="2IV2"/>
    </source>
</evidence>
<evidence type="ECO:0007829" key="11">
    <source>
        <dbReference type="PDB" id="1AA6"/>
    </source>
</evidence>
<evidence type="ECO:0007829" key="12">
    <source>
        <dbReference type="PDB" id="1FDI"/>
    </source>
</evidence>
<evidence type="ECO:0007829" key="13">
    <source>
        <dbReference type="PDB" id="1FDO"/>
    </source>
</evidence>
<evidence type="ECO:0007829" key="14">
    <source>
        <dbReference type="PDB" id="2IV2"/>
    </source>
</evidence>
<evidence type="ECO:0007829" key="15">
    <source>
        <dbReference type="PDB" id="7Z0T"/>
    </source>
</evidence>
<gene>
    <name type="primary">fdhF</name>
    <name type="ordered locus">b4079</name>
    <name type="ordered locus">JW4040</name>
</gene>
<reference key="1">
    <citation type="journal article" date="1986" name="Proc. Natl. Acad. Sci. U.S.A.">
        <title>Nucleotide sequence and expression of the selenocysteine-containing polypeptide of formate dehydrogenase (formate-hydrogen-lyase-linked) from Escherichia coli.</title>
        <authorList>
            <person name="Zinoni F."/>
            <person name="Birkmann A."/>
            <person name="Stadtman T.C."/>
            <person name="Boeck A."/>
        </authorList>
    </citation>
    <scope>NUCLEOTIDE SEQUENCE [GENOMIC DNA]</scope>
    <source>
        <strain>K12 / MC4100 / ATCC 35695 / DSM 6574</strain>
    </source>
</reference>
<reference key="2">
    <citation type="journal article" date="1993" name="Nucleic Acids Res.">
        <title>Analysis of the Escherichia coli genome. IV. DNA sequence of the region from 89.2 to 92.8 minutes.</title>
        <authorList>
            <person name="Blattner F.R."/>
            <person name="Burland V.D."/>
            <person name="Plunkett G. III"/>
            <person name="Sofia H.J."/>
            <person name="Daniels D.L."/>
        </authorList>
    </citation>
    <scope>NUCLEOTIDE SEQUENCE [LARGE SCALE GENOMIC DNA]</scope>
    <source>
        <strain>K12 / MG1655 / ATCC 47076</strain>
    </source>
</reference>
<reference key="3">
    <citation type="journal article" date="1997" name="Science">
        <title>The complete genome sequence of Escherichia coli K-12.</title>
        <authorList>
            <person name="Blattner F.R."/>
            <person name="Plunkett G. III"/>
            <person name="Bloch C.A."/>
            <person name="Perna N.T."/>
            <person name="Burland V."/>
            <person name="Riley M."/>
            <person name="Collado-Vides J."/>
            <person name="Glasner J.D."/>
            <person name="Rode C.K."/>
            <person name="Mayhew G.F."/>
            <person name="Gregor J."/>
            <person name="Davis N.W."/>
            <person name="Kirkpatrick H.A."/>
            <person name="Goeden M.A."/>
            <person name="Rose D.J."/>
            <person name="Mau B."/>
            <person name="Shao Y."/>
        </authorList>
    </citation>
    <scope>NUCLEOTIDE SEQUENCE [LARGE SCALE GENOMIC DNA]</scope>
    <source>
        <strain>K12 / MG1655 / ATCC 47076</strain>
    </source>
</reference>
<reference key="4">
    <citation type="journal article" date="2006" name="Mol. Syst. Biol.">
        <title>Highly accurate genome sequences of Escherichia coli K-12 strains MG1655 and W3110.</title>
        <authorList>
            <person name="Hayashi K."/>
            <person name="Morooka N."/>
            <person name="Yamamoto Y."/>
            <person name="Fujita K."/>
            <person name="Isono K."/>
            <person name="Choi S."/>
            <person name="Ohtsubo E."/>
            <person name="Baba T."/>
            <person name="Wanner B.L."/>
            <person name="Mori H."/>
            <person name="Horiuchi T."/>
        </authorList>
    </citation>
    <scope>NUCLEOTIDE SEQUENCE [LARGE SCALE GENOMIC DNA]</scope>
    <source>
        <strain>K12 / W3110 / ATCC 27325 / DSM 5911</strain>
    </source>
</reference>
<reference key="5">
    <citation type="journal article" date="1990" name="J. Biol. Chem.">
        <title>Escherichia coli formate-hydrogen lyase. Purification and properties of the selenium-dependent formate dehydrogenase component.</title>
        <authorList>
            <person name="Axley M.J."/>
            <person name="Grahame D.A."/>
            <person name="Stadtman T.C."/>
        </authorList>
    </citation>
    <scope>PROTEIN SEQUENCE OF 1-12</scope>
    <scope>CHARACTERIZATION</scope>
</reference>
<reference key="6">
    <citation type="journal article" date="1996" name="J. Biol. Chem.">
        <title>Characterization of crystalline formate dehydrogenase H from Escherichia coli. Stabilization, EPR spectroscopy, and preliminary crystallographic analysis.</title>
        <authorList>
            <person name="Gladyshev V.N."/>
            <person name="Boyington J.C."/>
            <person name="Khangulov S.V."/>
            <person name="Grahame D.A."/>
            <person name="Stadtman T.C."/>
            <person name="Sun P.D."/>
        </authorList>
    </citation>
    <scope>ACTIVITY REGULATION</scope>
    <scope>CRYSTALLIZATION</scope>
</reference>
<reference key="7">
    <citation type="journal article" date="1998" name="Biochemistry">
        <title>Selenium-containing formate dehydrogenase H from Escherichia coli: a molybdopterin enzyme that catalyzes formate oxidation without oxygen transfer.</title>
        <authorList>
            <person name="Khangulov S.V."/>
            <person name="Gladyshev V.N."/>
            <person name="Dismukes G.C."/>
            <person name="Stadtman T.C."/>
        </authorList>
    </citation>
    <scope>CATALYTIC ACTIVITY</scope>
    <scope>ACTIVITY REGULATION</scope>
    <scope>COFACTOR</scope>
</reference>
<reference evidence="7 8 9" key="8">
    <citation type="journal article" date="1997" name="Science">
        <title>Crystal structure of formate dehydrogenase H: catalysis involving Mo, molybdopterin, selenocysteine, and an Fe4S4 cluster.</title>
        <authorList>
            <person name="Boyington J.C."/>
            <person name="Gladyshev V.N."/>
            <person name="Khangulov S.V."/>
            <person name="Stadtman T.C."/>
            <person name="Sun P.D."/>
        </authorList>
    </citation>
    <scope>X-RAY CRYSTALLOGRAPHY (2.30 ANGSTROMS) IN COMPLEX WITH IRON-SULFUR (4FE-4S); MOLYBDENUM ION AND MOLYBDOPTERIN</scope>
    <scope>SELENOCYSTEINE AT SEC-140</scope>
    <scope>COFACTOR</scope>
    <scope>CATALYTIC ACTIVITY</scope>
</reference>
<reference evidence="10" key="9">
    <citation type="journal article" date="2006" name="J. Biol. Inorg. Chem.">
        <title>Formate-reduced E. coli formate dehydrogenase H: The reinterpretation of the crystal structure suggests a new reaction mechanism.</title>
        <authorList>
            <person name="Raaijmakers H.C."/>
            <person name="Romao M.J."/>
        </authorList>
    </citation>
    <scope>X-RAY CRYSTALLOGRAPHY (2.27 ANGSTROMS) IN COMPLEX WITH IRON-SULFUR (4FE-4S) AND MOLYBDOPTERIN</scope>
    <scope>CATALYTIC ACTIVITY</scope>
</reference>
<comment type="function">
    <text>Decomposes formic acid to hydrogen and carbon dioxide under anaerobic conditions in the absence of exogenous electron acceptors.</text>
</comment>
<comment type="catalytic activity">
    <reaction evidence="2 4 5">
        <text>formate + A + H(+) = AH2 + CO2</text>
        <dbReference type="Rhea" id="RHEA:27290"/>
        <dbReference type="ChEBI" id="CHEBI:13193"/>
        <dbReference type="ChEBI" id="CHEBI:15378"/>
        <dbReference type="ChEBI" id="CHEBI:15740"/>
        <dbReference type="ChEBI" id="CHEBI:16526"/>
        <dbReference type="ChEBI" id="CHEBI:17499"/>
        <dbReference type="EC" id="1.17.98.4"/>
    </reaction>
</comment>
<comment type="cofactor">
    <cofactor evidence="2 4">
        <name>[4Fe-4S] cluster</name>
        <dbReference type="ChEBI" id="CHEBI:49883"/>
    </cofactor>
    <text evidence="2 4">Binds 1 [4Fe-4S] cluster per subunit.</text>
</comment>
<comment type="cofactor">
    <cofactor evidence="2 4">
        <name>Mo-bis(molybdopterin guanine dinucleotide)</name>
        <dbReference type="ChEBI" id="CHEBI:60539"/>
    </cofactor>
    <text evidence="2 4">Binds 1 molybdenum-bis(molybdopterin guanine dinucleotide) (Mo-bis-MGD) cofactor per subunit.</text>
</comment>
<comment type="activity regulation">
    <text evidence="3 5">Inhibited by aerobic conditions.</text>
</comment>
<comment type="subunit">
    <text evidence="2 4">Consists of two separable enzymatic activities: a formate dehydrogenase component (FDH-H) and hydrogenase-3.</text>
</comment>
<comment type="interaction">
    <interactant intactId="EBI-1121603">
        <id>P07658</id>
    </interactant>
    <interactant intactId="EBI-541977">
        <id>P16433</id>
        <label>hycG</label>
    </interactant>
    <organismsDiffer>false</organismsDiffer>
    <experiments>3</experiments>
</comment>
<comment type="induction">
    <text>By formate. Repressed by oxygen, nitrate, nitrite, and other electron acceptors.</text>
</comment>
<comment type="similarity">
    <text evidence="6">Belongs to the prokaryotic molybdopterin-containing oxidoreductase family.</text>
</comment>
<organism>
    <name type="scientific">Escherichia coli (strain K12)</name>
    <dbReference type="NCBI Taxonomy" id="83333"/>
    <lineage>
        <taxon>Bacteria</taxon>
        <taxon>Pseudomonadati</taxon>
        <taxon>Pseudomonadota</taxon>
        <taxon>Gammaproteobacteria</taxon>
        <taxon>Enterobacterales</taxon>
        <taxon>Enterobacteriaceae</taxon>
        <taxon>Escherichia</taxon>
    </lineage>
</organism>
<keyword id="KW-0002">3D-structure</keyword>
<keyword id="KW-0004">4Fe-4S</keyword>
<keyword id="KW-0903">Direct protein sequencing</keyword>
<keyword id="KW-0408">Iron</keyword>
<keyword id="KW-0411">Iron-sulfur</keyword>
<keyword id="KW-0479">Metal-binding</keyword>
<keyword id="KW-0500">Molybdenum</keyword>
<keyword id="KW-0520">NAD</keyword>
<keyword id="KW-0560">Oxidoreductase</keyword>
<keyword id="KW-1185">Reference proteome</keyword>
<keyword id="KW-0712">Selenocysteine</keyword>
<sequence>MKKVVTVCPYCASGCKINLVVDNGKIVRAEAAQGKTNQGTLCLKGYYGWDFINDTQILTPRLKTPMIRRQRGGKLEPVSWDEALNYVAERLSAIKEKYGPDAIQTTGSSRGTGNETNYVMQKFARAVIGTNNVDCCARVUHGPSVAGLHQSVGNGAMSNAINEIDNTDLVFVFGYNPADSHPIVANHVINAKRNGAKIIVCDPRKIETARIADMHIALKNGSNIALLNAMGHVIIEENLYDKAFVASRTEGFEEYRKIVEGYTPESVEDITGVSASEIRQAARMYAQAKSAAILWGMGVTQFYQGVETVRSLTSLAMLTGNLGKPHAGVNPVRGQNNVQGACDMGALPDTYPGYQYVKDPANREKFAKAWGVESLPAHTGYRISELPHRAAHGEVRAAYIMGEDPLQTDAELSAVRKAFEDLELVIVQDIFMTKTASAADVILPSTSWGEHEGVFTAADRGFQRFFKAVEPKWDLKTDWQIISEIATRMGYPMHYNNTQEIWDELRHLCPDFYGATYEKMGELGFIQWPCRDTSDADQGTSYLFKEKFDTPNGLAQFFTCDWVAPIDKLTDEYPMVLSTVREVGHYSCRSMTGNCAALAALADEPGYAQINTEDAKRLGIEDEALVWVHSRKGKIITRAQVSDRPNKGAIYMTYQWWIGACNELVTENLSPITKTPEYKYCAVRVEPIADQRAAEQYVIDEYNKLKTRLREAALA</sequence>
<dbReference type="EC" id="1.17.98.4" evidence="2 4 5"/>
<dbReference type="EMBL" id="M13563">
    <property type="protein sequence ID" value="AAA23754.3"/>
    <property type="molecule type" value="Genomic_DNA"/>
</dbReference>
<dbReference type="EMBL" id="U00006">
    <property type="protein sequence ID" value="AAC43173.2"/>
    <property type="molecule type" value="Genomic_DNA"/>
</dbReference>
<dbReference type="EMBL" id="U00096">
    <property type="protein sequence ID" value="AAD13462.1"/>
    <property type="molecule type" value="Genomic_DNA"/>
</dbReference>
<dbReference type="EMBL" id="AP009048">
    <property type="protein sequence ID" value="BAE78081.1"/>
    <property type="molecule type" value="Genomic_DNA"/>
</dbReference>
<dbReference type="PIR" id="A24145">
    <property type="entry name" value="DEECFS"/>
</dbReference>
<dbReference type="RefSeq" id="NP_418503.1">
    <property type="nucleotide sequence ID" value="NC_000913.3"/>
</dbReference>
<dbReference type="RefSeq" id="WP_001300547.1">
    <property type="nucleotide sequence ID" value="NZ_STEB01000014.1"/>
</dbReference>
<dbReference type="PDB" id="1AA6">
    <property type="method" value="X-ray"/>
    <property type="resolution" value="2.30 A"/>
    <property type="chains" value="A=1-715"/>
</dbReference>
<dbReference type="PDB" id="1FDI">
    <property type="method" value="X-ray"/>
    <property type="resolution" value="2.90 A"/>
    <property type="chains" value="A=1-715"/>
</dbReference>
<dbReference type="PDB" id="1FDO">
    <property type="method" value="X-ray"/>
    <property type="resolution" value="2.80 A"/>
    <property type="chains" value="A=1-715"/>
</dbReference>
<dbReference type="PDB" id="2IV2">
    <property type="method" value="X-ray"/>
    <property type="resolution" value="2.27 A"/>
    <property type="chains" value="X=1-715"/>
</dbReference>
<dbReference type="PDB" id="7Z0T">
    <property type="method" value="EM"/>
    <property type="resolution" value="3.40 A"/>
    <property type="chains" value="A=1-715"/>
</dbReference>
<dbReference type="PDBsum" id="1AA6"/>
<dbReference type="PDBsum" id="1FDI"/>
<dbReference type="PDBsum" id="1FDO"/>
<dbReference type="PDBsum" id="2IV2"/>
<dbReference type="PDBsum" id="7Z0T"/>
<dbReference type="EMDB" id="EMD-14430"/>
<dbReference type="SMR" id="P07658"/>
<dbReference type="BioGRID" id="4262950">
    <property type="interactions" value="33"/>
</dbReference>
<dbReference type="BioGRID" id="852878">
    <property type="interactions" value="1"/>
</dbReference>
<dbReference type="ComplexPortal" id="CPX-317">
    <property type="entry name" value="Formate hydrogenlyase-H/Hydrogenase-3 complex"/>
</dbReference>
<dbReference type="ComplexPortal" id="CPX-6028">
    <property type="entry name" value="Formate hydrogenlyase-H/Hydrogenase-4 complex"/>
</dbReference>
<dbReference type="DIP" id="DIP-9572N"/>
<dbReference type="FunCoup" id="P07658">
    <property type="interactions" value="373"/>
</dbReference>
<dbReference type="IntAct" id="P07658">
    <property type="interactions" value="14"/>
</dbReference>
<dbReference type="STRING" id="511145.b4079"/>
<dbReference type="DrugBank" id="DB02345">
    <property type="generic name" value="Selenocysteine"/>
</dbReference>
<dbReference type="TCDB" id="3.D.1.9.2">
    <property type="family name" value="the h+ or na+-translocating nadh dehydrogenase (ndh) family"/>
</dbReference>
<dbReference type="jPOST" id="P07658"/>
<dbReference type="PaxDb" id="511145-b4079"/>
<dbReference type="GeneID" id="75203235"/>
<dbReference type="GeneID" id="948584"/>
<dbReference type="KEGG" id="ecj:JW4040"/>
<dbReference type="KEGG" id="eco:b4079"/>
<dbReference type="PATRIC" id="fig|511145.12.peg.4203"/>
<dbReference type="EchoBASE" id="EB0281"/>
<dbReference type="eggNOG" id="COG3383">
    <property type="taxonomic scope" value="Bacteria"/>
</dbReference>
<dbReference type="HOGENOM" id="CLU_000422_4_0_6"/>
<dbReference type="InParanoid" id="P07658"/>
<dbReference type="OMA" id="PEYKHCA"/>
<dbReference type="OrthoDB" id="9810782at2"/>
<dbReference type="PhylomeDB" id="P07658"/>
<dbReference type="BioCyc" id="EcoCyc:FORMATEDEHYDROGH-MONOMER"/>
<dbReference type="BioCyc" id="MetaCyc:FORMATEDEHYDROGH-MONOMER"/>
<dbReference type="BRENDA" id="1.17.1.9">
    <property type="organism ID" value="2026"/>
</dbReference>
<dbReference type="BRENDA" id="1.17.98.4">
    <property type="organism ID" value="2026"/>
</dbReference>
<dbReference type="EvolutionaryTrace" id="P07658"/>
<dbReference type="PRO" id="PR:P07658"/>
<dbReference type="Proteomes" id="UP000000625">
    <property type="component" value="Chromosome"/>
</dbReference>
<dbReference type="GO" id="GO:0005829">
    <property type="term" value="C:cytosol"/>
    <property type="evidence" value="ECO:0000314"/>
    <property type="project" value="EcoCyc"/>
</dbReference>
<dbReference type="GO" id="GO:0009326">
    <property type="term" value="C:formate dehydrogenase complex"/>
    <property type="evidence" value="ECO:0000353"/>
    <property type="project" value="ComplexPortal"/>
</dbReference>
<dbReference type="GO" id="GO:0016020">
    <property type="term" value="C:membrane"/>
    <property type="evidence" value="ECO:0000318"/>
    <property type="project" value="GO_Central"/>
</dbReference>
<dbReference type="GO" id="GO:0051539">
    <property type="term" value="F:4 iron, 4 sulfur cluster binding"/>
    <property type="evidence" value="ECO:0000314"/>
    <property type="project" value="EcoCyc"/>
</dbReference>
<dbReference type="GO" id="GO:0008863">
    <property type="term" value="F:formate dehydrogenase (NAD+) activity"/>
    <property type="evidence" value="ECO:0007669"/>
    <property type="project" value="InterPro"/>
</dbReference>
<dbReference type="GO" id="GO:0046872">
    <property type="term" value="F:metal ion binding"/>
    <property type="evidence" value="ECO:0007669"/>
    <property type="project" value="UniProtKB-KW"/>
</dbReference>
<dbReference type="GO" id="GO:0043546">
    <property type="term" value="F:molybdopterin cofactor binding"/>
    <property type="evidence" value="ECO:0000314"/>
    <property type="project" value="EcoCyc"/>
</dbReference>
<dbReference type="GO" id="GO:0016903">
    <property type="term" value="F:oxidoreductase activity, acting on the aldehyde or oxo group of donors"/>
    <property type="evidence" value="ECO:0000314"/>
    <property type="project" value="EcoCyc"/>
</dbReference>
<dbReference type="GO" id="GO:0019645">
    <property type="term" value="P:anaerobic electron transport chain"/>
    <property type="evidence" value="ECO:0000314"/>
    <property type="project" value="ComplexPortal"/>
</dbReference>
<dbReference type="GO" id="GO:0009061">
    <property type="term" value="P:anaerobic respiration"/>
    <property type="evidence" value="ECO:0000314"/>
    <property type="project" value="ComplexPortal"/>
</dbReference>
<dbReference type="GO" id="GO:0015944">
    <property type="term" value="P:formate oxidation"/>
    <property type="evidence" value="ECO:0000314"/>
    <property type="project" value="ComplexPortal"/>
</dbReference>
<dbReference type="GO" id="GO:0006007">
    <property type="term" value="P:glucose catabolic process"/>
    <property type="evidence" value="ECO:0000314"/>
    <property type="project" value="ComplexPortal"/>
</dbReference>
<dbReference type="GO" id="GO:0022904">
    <property type="term" value="P:respiratory electron transport chain"/>
    <property type="evidence" value="ECO:0000318"/>
    <property type="project" value="GO_Central"/>
</dbReference>
<dbReference type="GO" id="GO:0019628">
    <property type="term" value="P:urate catabolic process"/>
    <property type="evidence" value="ECO:0000315"/>
    <property type="project" value="EcoCyc"/>
</dbReference>
<dbReference type="CDD" id="cd02790">
    <property type="entry name" value="MopB_CT_Formate-Dh_H"/>
    <property type="match status" value="1"/>
</dbReference>
<dbReference type="CDD" id="cd02753">
    <property type="entry name" value="MopB_Formate-Dh-H"/>
    <property type="match status" value="1"/>
</dbReference>
<dbReference type="FunFam" id="2.20.25.90:FF:000001">
    <property type="entry name" value="Formate dehydrogenase subunit alpha"/>
    <property type="match status" value="1"/>
</dbReference>
<dbReference type="FunFam" id="3.40.228.10:FF:000002">
    <property type="entry name" value="Formate dehydrogenase subunit alpha"/>
    <property type="match status" value="1"/>
</dbReference>
<dbReference type="FunFam" id="2.40.40.20:FF:000011">
    <property type="entry name" value="Formate dehydrogenase, alpha subunit"/>
    <property type="match status" value="1"/>
</dbReference>
<dbReference type="Gene3D" id="2.40.40.20">
    <property type="match status" value="1"/>
</dbReference>
<dbReference type="Gene3D" id="3.40.50.740">
    <property type="match status" value="1"/>
</dbReference>
<dbReference type="Gene3D" id="2.20.25.90">
    <property type="entry name" value="ADC-like domains"/>
    <property type="match status" value="1"/>
</dbReference>
<dbReference type="Gene3D" id="3.40.228.10">
    <property type="entry name" value="Dimethylsulfoxide Reductase, domain 2"/>
    <property type="match status" value="1"/>
</dbReference>
<dbReference type="Gene3D" id="1.20.5.460">
    <property type="entry name" value="Single helix bin"/>
    <property type="match status" value="1"/>
</dbReference>
<dbReference type="InterPro" id="IPR009010">
    <property type="entry name" value="Asp_de-COase-like_dom_sf"/>
</dbReference>
<dbReference type="InterPro" id="IPR041925">
    <property type="entry name" value="CT_Formate-Dh_H"/>
</dbReference>
<dbReference type="InterPro" id="IPR041924">
    <property type="entry name" value="Formate_Dh-H_N"/>
</dbReference>
<dbReference type="InterPro" id="IPR006478">
    <property type="entry name" value="Formate_DH_asu"/>
</dbReference>
<dbReference type="InterPro" id="IPR006657">
    <property type="entry name" value="MoPterin_dinucl-bd_dom"/>
</dbReference>
<dbReference type="InterPro" id="IPR006656">
    <property type="entry name" value="Mopterin_OxRdtase"/>
</dbReference>
<dbReference type="InterPro" id="IPR006963">
    <property type="entry name" value="Mopterin_OxRdtase_4Fe-4S_dom"/>
</dbReference>
<dbReference type="InterPro" id="IPR006655">
    <property type="entry name" value="Mopterin_OxRdtase_prok_CS"/>
</dbReference>
<dbReference type="InterPro" id="IPR027467">
    <property type="entry name" value="MopterinOxRdtase_cofactor_BS"/>
</dbReference>
<dbReference type="InterPro" id="IPR050123">
    <property type="entry name" value="Prok_molybdopt-oxidoreductase"/>
</dbReference>
<dbReference type="NCBIfam" id="TIGR01591">
    <property type="entry name" value="Fdh-alpha"/>
    <property type="match status" value="1"/>
</dbReference>
<dbReference type="PANTHER" id="PTHR43105:SF14">
    <property type="entry name" value="FORMATE DEHYDROGENASE H"/>
    <property type="match status" value="1"/>
</dbReference>
<dbReference type="PANTHER" id="PTHR43105">
    <property type="entry name" value="RESPIRATORY NITRATE REDUCTASE"/>
    <property type="match status" value="1"/>
</dbReference>
<dbReference type="Pfam" id="PF04879">
    <property type="entry name" value="Molybdop_Fe4S4"/>
    <property type="match status" value="1"/>
</dbReference>
<dbReference type="Pfam" id="PF00384">
    <property type="entry name" value="Molybdopterin"/>
    <property type="match status" value="1"/>
</dbReference>
<dbReference type="Pfam" id="PF01568">
    <property type="entry name" value="Molydop_binding"/>
    <property type="match status" value="1"/>
</dbReference>
<dbReference type="PIRSF" id="PIRSF000144">
    <property type="entry name" value="CbbBc"/>
    <property type="match status" value="1"/>
</dbReference>
<dbReference type="SMART" id="SM00926">
    <property type="entry name" value="Molybdop_Fe4S4"/>
    <property type="match status" value="1"/>
</dbReference>
<dbReference type="SUPFAM" id="SSF50692">
    <property type="entry name" value="ADC-like"/>
    <property type="match status" value="1"/>
</dbReference>
<dbReference type="SUPFAM" id="SSF53706">
    <property type="entry name" value="Formate dehydrogenase/DMSO reductase, domains 1-3"/>
    <property type="match status" value="1"/>
</dbReference>
<dbReference type="PROSITE" id="PS51669">
    <property type="entry name" value="4FE4S_MOW_BIS_MGD"/>
    <property type="match status" value="1"/>
</dbReference>
<dbReference type="PROSITE" id="PS00551">
    <property type="entry name" value="MOLYBDOPTERIN_PROK_1"/>
    <property type="match status" value="1"/>
</dbReference>
<dbReference type="PROSITE" id="PS00490">
    <property type="entry name" value="MOLYBDOPTERIN_PROK_2"/>
    <property type="match status" value="1"/>
</dbReference>
<dbReference type="PROSITE" id="PS00932">
    <property type="entry name" value="MOLYBDOPTERIN_PROK_3"/>
    <property type="match status" value="1"/>
</dbReference>
<name>FDHF_ECOLI</name>
<feature type="chain" id="PRO_0000063221" description="Formate dehydrogenase H">
    <location>
        <begin position="1"/>
        <end position="715"/>
    </location>
</feature>
<feature type="domain" description="4Fe-4S Mo/W bis-MGD-type" evidence="1">
    <location>
        <begin position="1"/>
        <end position="56"/>
    </location>
</feature>
<feature type="active site" description="Electron donor/acceptor">
    <location>
        <position position="44"/>
    </location>
</feature>
<feature type="active site" description="Proton donor/acceptor">
    <location>
        <position position="140"/>
    </location>
</feature>
<feature type="binding site" evidence="2 4 7 8 9 10">
    <location>
        <position position="8"/>
    </location>
    <ligand>
        <name>[4Fe-4S] cluster</name>
        <dbReference type="ChEBI" id="CHEBI:49883"/>
    </ligand>
</feature>
<feature type="binding site" evidence="2 4 7 8 9 10">
    <location>
        <position position="11"/>
    </location>
    <ligand>
        <name>[4Fe-4S] cluster</name>
        <dbReference type="ChEBI" id="CHEBI:49883"/>
    </ligand>
</feature>
<feature type="binding site" evidence="2 4 7 8 9 10">
    <location>
        <position position="15"/>
    </location>
    <ligand>
        <name>[4Fe-4S] cluster</name>
        <dbReference type="ChEBI" id="CHEBI:49883"/>
    </ligand>
</feature>
<feature type="binding site" evidence="2 4 7 8 9 10">
    <location>
        <position position="42"/>
    </location>
    <ligand>
        <name>[4Fe-4S] cluster</name>
        <dbReference type="ChEBI" id="CHEBI:49883"/>
    </ligand>
</feature>
<feature type="binding site" evidence="2 4 7 8 9 10">
    <location>
        <position position="110"/>
    </location>
    <ligand>
        <name>Mo-bis(molybdopterin guanine dinucleotide)</name>
        <dbReference type="ChEBI" id="CHEBI:60539"/>
    </ligand>
</feature>
<feature type="binding site" evidence="2 4 7 8 9 10">
    <location>
        <position position="140"/>
    </location>
    <ligand>
        <name>Mo-bis(molybdopterin guanine dinucleotide)</name>
        <dbReference type="ChEBI" id="CHEBI:60539"/>
    </ligand>
    <ligandPart>
        <name>Mo</name>
        <dbReference type="ChEBI" id="CHEBI:28685"/>
    </ligandPart>
</feature>
<feature type="binding site" evidence="2 4 7 8 9 10">
    <location>
        <position position="176"/>
    </location>
    <ligand>
        <name>Mo-bis(molybdopterin guanine dinucleotide)</name>
        <dbReference type="ChEBI" id="CHEBI:60539"/>
    </ligand>
</feature>
<feature type="binding site" evidence="2 4 7 8 9 10">
    <location>
        <position position="179"/>
    </location>
    <ligand>
        <name>Mo-bis(molybdopterin guanine dinucleotide)</name>
        <dbReference type="ChEBI" id="CHEBI:60539"/>
    </ligand>
</feature>
<feature type="binding site" evidence="2 4 7 8 9 10">
    <location>
        <position position="180"/>
    </location>
    <ligand>
        <name>Mo-bis(molybdopterin guanine dinucleotide)</name>
        <dbReference type="ChEBI" id="CHEBI:60539"/>
    </ligand>
</feature>
<feature type="binding site" evidence="2 4 7 8 9 10">
    <location>
        <position position="201"/>
    </location>
    <ligand>
        <name>Mo-bis(molybdopterin guanine dinucleotide)</name>
        <dbReference type="ChEBI" id="CHEBI:60539"/>
    </ligand>
</feature>
<feature type="binding site" evidence="2 4 7 8 9 10">
    <location>
        <position position="202"/>
    </location>
    <ligand>
        <name>Mo-bis(molybdopterin guanine dinucleotide)</name>
        <dbReference type="ChEBI" id="CHEBI:60539"/>
    </ligand>
</feature>
<feature type="binding site" evidence="2 4 7 8 9 10">
    <location>
        <position position="204"/>
    </location>
    <ligand>
        <name>Mo-bis(molybdopterin guanine dinucleotide)</name>
        <dbReference type="ChEBI" id="CHEBI:60539"/>
    </ligand>
</feature>
<feature type="binding site" evidence="2 4 7 8 9 10">
    <location>
        <position position="221"/>
    </location>
    <ligand>
        <name>Mo-bis(molybdopterin guanine dinucleotide)</name>
        <dbReference type="ChEBI" id="CHEBI:60539"/>
    </ligand>
</feature>
<feature type="binding site" evidence="2 4 7 8 9 10">
    <location>
        <position position="223"/>
    </location>
    <ligand>
        <name>Mo-bis(molybdopterin guanine dinucleotide)</name>
        <dbReference type="ChEBI" id="CHEBI:60539"/>
    </ligand>
</feature>
<feature type="binding site" evidence="4 7 8 9">
    <location>
        <position position="297"/>
    </location>
    <ligand>
        <name>Mo-bis(molybdopterin guanine dinucleotide)</name>
        <dbReference type="ChEBI" id="CHEBI:60539"/>
    </ligand>
</feature>
<feature type="binding site" evidence="2 4 7 8 10">
    <location>
        <position position="335"/>
    </location>
    <ligand>
        <name>Mo-bis(molybdopterin guanine dinucleotide)</name>
        <dbReference type="ChEBI" id="CHEBI:60539"/>
    </ligand>
</feature>
<feature type="binding site" evidence="2 4 7 8 9 10">
    <location>
        <position position="404"/>
    </location>
    <ligand>
        <name>Mo-bis(molybdopterin guanine dinucleotide)</name>
        <dbReference type="ChEBI" id="CHEBI:60539"/>
    </ligand>
</feature>
<feature type="binding site" evidence="2 4 8 9 10">
    <location>
        <position position="408"/>
    </location>
    <ligand>
        <name>Mo-bis(molybdopterin guanine dinucleotide)</name>
        <dbReference type="ChEBI" id="CHEBI:60539"/>
    </ligand>
</feature>
<feature type="binding site" evidence="2 4 7 8 9 10">
    <location>
        <position position="428"/>
    </location>
    <ligand>
        <name>Mo-bis(molybdopterin guanine dinucleotide)</name>
        <dbReference type="ChEBI" id="CHEBI:60539"/>
    </ligand>
</feature>
<feature type="binding site" evidence="2 4 7 8 9 10">
    <location>
        <position position="429"/>
    </location>
    <ligand>
        <name>Mo-bis(molybdopterin guanine dinucleotide)</name>
        <dbReference type="ChEBI" id="CHEBI:60539"/>
    </ligand>
</feature>
<feature type="binding site" evidence="4 7 8 9">
    <location>
        <position position="445"/>
    </location>
    <ligand>
        <name>Mo-bis(molybdopterin guanine dinucleotide)</name>
        <dbReference type="ChEBI" id="CHEBI:60539"/>
    </ligand>
</feature>
<feature type="binding site" evidence="2 4 7 8 9 10">
    <location>
        <position position="478"/>
    </location>
    <ligand>
        <name>Mo-bis(molybdopterin guanine dinucleotide)</name>
        <dbReference type="ChEBI" id="CHEBI:60539"/>
    </ligand>
</feature>
<feature type="binding site" evidence="2 4 7 8 9 10">
    <location>
        <position position="581"/>
    </location>
    <ligand>
        <name>Mo-bis(molybdopterin guanine dinucleotide)</name>
        <dbReference type="ChEBI" id="CHEBI:60539"/>
    </ligand>
</feature>
<feature type="binding site" evidence="2 4 7 8 9 10">
    <location>
        <position position="582"/>
    </location>
    <ligand>
        <name>Mo-bis(molybdopterin guanine dinucleotide)</name>
        <dbReference type="ChEBI" id="CHEBI:60539"/>
    </ligand>
</feature>
<feature type="binding site" evidence="2 4 7 8 9 10">
    <location>
        <position position="585"/>
    </location>
    <ligand>
        <name>Mo-bis(molybdopterin guanine dinucleotide)</name>
        <dbReference type="ChEBI" id="CHEBI:60539"/>
    </ligand>
</feature>
<feature type="binding site" evidence="2 4 7 8 9 10">
    <location>
        <position position="587"/>
    </location>
    <ligand>
        <name>Mo-bis(molybdopterin guanine dinucleotide)</name>
        <dbReference type="ChEBI" id="CHEBI:60539"/>
    </ligand>
</feature>
<feature type="binding site" evidence="2 4 8 9 10">
    <location>
        <position position="678"/>
    </location>
    <ligand>
        <name>Mo-bis(molybdopterin guanine dinucleotide)</name>
        <dbReference type="ChEBI" id="CHEBI:60539"/>
    </ligand>
</feature>
<feature type="binding site" evidence="2 4 7 8 9 10">
    <location>
        <position position="679"/>
    </location>
    <ligand>
        <name>Mo-bis(molybdopterin guanine dinucleotide)</name>
        <dbReference type="ChEBI" id="CHEBI:60539"/>
    </ligand>
</feature>
<feature type="site" description="Important for catalytic activity">
    <location>
        <position position="141"/>
    </location>
</feature>
<feature type="site" description="Important for catalytic activity">
    <location>
        <position position="333"/>
    </location>
</feature>
<feature type="non-standard amino acid" description="Selenocysteine" evidence="4">
    <location>
        <position position="140"/>
    </location>
</feature>
<feature type="sequence conflict" description="In Ref. 1; AAA23754." evidence="6" ref="1">
    <original>L</original>
    <variation>V</variation>
    <location>
        <position position="19"/>
    </location>
</feature>
<feature type="strand" evidence="14">
    <location>
        <begin position="2"/>
        <end position="7"/>
    </location>
</feature>
<feature type="strand" evidence="14">
    <location>
        <begin position="9"/>
        <end position="11"/>
    </location>
</feature>
<feature type="strand" evidence="14">
    <location>
        <begin position="16"/>
        <end position="22"/>
    </location>
</feature>
<feature type="strand" evidence="14">
    <location>
        <begin position="25"/>
        <end position="31"/>
    </location>
</feature>
<feature type="turn" evidence="14">
    <location>
        <begin position="35"/>
        <end position="39"/>
    </location>
</feature>
<feature type="helix" evidence="14">
    <location>
        <begin position="43"/>
        <end position="47"/>
    </location>
</feature>
<feature type="helix" evidence="14">
    <location>
        <begin position="50"/>
        <end position="53"/>
    </location>
</feature>
<feature type="strand" evidence="14">
    <location>
        <begin position="57"/>
        <end position="59"/>
    </location>
</feature>
<feature type="strand" evidence="11">
    <location>
        <begin position="69"/>
        <end position="72"/>
    </location>
</feature>
<feature type="strand" evidence="15">
    <location>
        <begin position="75"/>
        <end position="77"/>
    </location>
</feature>
<feature type="helix" evidence="14">
    <location>
        <begin position="80"/>
        <end position="98"/>
    </location>
</feature>
<feature type="helix" evidence="14">
    <location>
        <begin position="100"/>
        <end position="102"/>
    </location>
</feature>
<feature type="strand" evidence="14">
    <location>
        <begin position="103"/>
        <end position="106"/>
    </location>
</feature>
<feature type="strand" evidence="15">
    <location>
        <begin position="110"/>
        <end position="112"/>
    </location>
</feature>
<feature type="helix" evidence="14">
    <location>
        <begin position="114"/>
        <end position="126"/>
    </location>
</feature>
<feature type="helix" evidence="11">
    <location>
        <begin position="137"/>
        <end position="140"/>
    </location>
</feature>
<feature type="strand" evidence="14">
    <location>
        <begin position="143"/>
        <end position="145"/>
    </location>
</feature>
<feature type="helix" evidence="14">
    <location>
        <begin position="148"/>
        <end position="152"/>
    </location>
</feature>
<feature type="helix" evidence="14">
    <location>
        <begin position="161"/>
        <end position="166"/>
    </location>
</feature>
<feature type="strand" evidence="14">
    <location>
        <begin position="168"/>
        <end position="174"/>
    </location>
</feature>
<feature type="helix" evidence="14">
    <location>
        <begin position="177"/>
        <end position="180"/>
    </location>
</feature>
<feature type="helix" evidence="14">
    <location>
        <begin position="182"/>
        <end position="193"/>
    </location>
</feature>
<feature type="strand" evidence="14">
    <location>
        <begin position="197"/>
        <end position="201"/>
    </location>
</feature>
<feature type="helix" evidence="14">
    <location>
        <begin position="207"/>
        <end position="210"/>
    </location>
</feature>
<feature type="strand" evidence="14">
    <location>
        <begin position="213"/>
        <end position="216"/>
    </location>
</feature>
<feature type="helix" evidence="14">
    <location>
        <begin position="223"/>
        <end position="236"/>
    </location>
</feature>
<feature type="helix" evidence="14">
    <location>
        <begin position="242"/>
        <end position="248"/>
    </location>
</feature>
<feature type="helix" evidence="14">
    <location>
        <begin position="252"/>
        <end position="260"/>
    </location>
</feature>
<feature type="helix" evidence="14">
    <location>
        <begin position="265"/>
        <end position="267"/>
    </location>
</feature>
<feature type="helix" evidence="14">
    <location>
        <begin position="268"/>
        <end position="271"/>
    </location>
</feature>
<feature type="helix" evidence="14">
    <location>
        <begin position="275"/>
        <end position="287"/>
    </location>
</feature>
<feature type="strand" evidence="14">
    <location>
        <begin position="288"/>
        <end position="296"/>
    </location>
</feature>
<feature type="helix" evidence="14">
    <location>
        <begin position="299"/>
        <end position="301"/>
    </location>
</feature>
<feature type="strand" evidence="14">
    <location>
        <begin position="302"/>
        <end position="304"/>
    </location>
</feature>
<feature type="helix" evidence="14">
    <location>
        <begin position="305"/>
        <end position="318"/>
    </location>
</feature>
<feature type="strand" evidence="14">
    <location>
        <begin position="322"/>
        <end position="324"/>
    </location>
</feature>
<feature type="strand" evidence="14">
    <location>
        <begin position="328"/>
        <end position="332"/>
    </location>
</feature>
<feature type="helix" evidence="14">
    <location>
        <begin position="338"/>
        <end position="343"/>
    </location>
</feature>
<feature type="helix" evidence="14">
    <location>
        <begin position="352"/>
        <end position="354"/>
    </location>
</feature>
<feature type="strand" evidence="15">
    <location>
        <begin position="355"/>
        <end position="358"/>
    </location>
</feature>
<feature type="helix" evidence="14">
    <location>
        <begin position="360"/>
        <end position="369"/>
    </location>
</feature>
<feature type="strand" evidence="15">
    <location>
        <begin position="371"/>
        <end position="374"/>
    </location>
</feature>
<feature type="helix" evidence="14">
    <location>
        <begin position="383"/>
        <end position="385"/>
    </location>
</feature>
<feature type="helix" evidence="14">
    <location>
        <begin position="386"/>
        <end position="391"/>
    </location>
</feature>
<feature type="strand" evidence="14">
    <location>
        <begin position="397"/>
        <end position="402"/>
    </location>
</feature>
<feature type="helix" evidence="14">
    <location>
        <begin position="405"/>
        <end position="408"/>
    </location>
</feature>
<feature type="strand" evidence="14">
    <location>
        <begin position="409"/>
        <end position="411"/>
    </location>
</feature>
<feature type="helix" evidence="14">
    <location>
        <begin position="412"/>
        <end position="421"/>
    </location>
</feature>
<feature type="strand" evidence="14">
    <location>
        <begin position="422"/>
        <end position="431"/>
    </location>
</feature>
<feature type="helix" evidence="14">
    <location>
        <begin position="434"/>
        <end position="437"/>
    </location>
</feature>
<feature type="strand" evidence="14">
    <location>
        <begin position="440"/>
        <end position="445"/>
    </location>
</feature>
<feature type="helix" evidence="11">
    <location>
        <begin position="448"/>
        <end position="450"/>
    </location>
</feature>
<feature type="strand" evidence="14">
    <location>
        <begin position="453"/>
        <end position="456"/>
    </location>
</feature>
<feature type="strand" evidence="14">
    <location>
        <begin position="460"/>
        <end position="465"/>
    </location>
</feature>
<feature type="strand" evidence="14">
    <location>
        <begin position="472"/>
        <end position="474"/>
    </location>
</feature>
<feature type="helix" evidence="14">
    <location>
        <begin position="478"/>
        <end position="488"/>
    </location>
</feature>
<feature type="helix" evidence="14">
    <location>
        <begin position="498"/>
        <end position="508"/>
    </location>
</feature>
<feature type="turn" evidence="14">
    <location>
        <begin position="510"/>
        <end position="514"/>
    </location>
</feature>
<feature type="helix" evidence="14">
    <location>
        <begin position="517"/>
        <end position="520"/>
    </location>
</feature>
<feature type="turn" evidence="14">
    <location>
        <begin position="521"/>
        <end position="523"/>
    </location>
</feature>
<feature type="strand" evidence="14">
    <location>
        <begin position="526"/>
        <end position="528"/>
    </location>
</feature>
<feature type="turn" evidence="15">
    <location>
        <begin position="533"/>
        <end position="536"/>
    </location>
</feature>
<feature type="strand" evidence="14">
    <location>
        <begin position="541"/>
        <end position="543"/>
    </location>
</feature>
<feature type="strand" evidence="12">
    <location>
        <begin position="553"/>
        <end position="556"/>
    </location>
</feature>
<feature type="strand" evidence="14">
    <location>
        <begin position="571"/>
        <end position="573"/>
    </location>
</feature>
<feature type="strand" evidence="14">
    <location>
        <begin position="575"/>
        <end position="579"/>
    </location>
</feature>
<feature type="strand" evidence="12">
    <location>
        <begin position="583"/>
        <end position="585"/>
    </location>
</feature>
<feature type="helix" evidence="15">
    <location>
        <begin position="587"/>
        <end position="589"/>
    </location>
</feature>
<feature type="helix" evidence="14">
    <location>
        <begin position="592"/>
        <end position="594"/>
    </location>
</feature>
<feature type="helix" evidence="14">
    <location>
        <begin position="596"/>
        <end position="599"/>
    </location>
</feature>
<feature type="strand" evidence="14">
    <location>
        <begin position="607"/>
        <end position="611"/>
    </location>
</feature>
<feature type="helix" evidence="14">
    <location>
        <begin position="612"/>
        <end position="618"/>
    </location>
</feature>
<feature type="strand" evidence="14">
    <location>
        <begin position="625"/>
        <end position="629"/>
    </location>
</feature>
<feature type="strand" evidence="14">
    <location>
        <begin position="634"/>
        <end position="645"/>
    </location>
</feature>
<feature type="strand" evidence="14">
    <location>
        <begin position="649"/>
        <end position="652"/>
    </location>
</feature>
<feature type="strand" evidence="12">
    <location>
        <begin position="657"/>
        <end position="659"/>
    </location>
</feature>
<feature type="helix" evidence="13">
    <location>
        <begin position="661"/>
        <end position="663"/>
    </location>
</feature>
<feature type="turn" evidence="13">
    <location>
        <begin position="671"/>
        <end position="673"/>
    </location>
</feature>
<feature type="strand" evidence="14">
    <location>
        <begin position="681"/>
        <end position="687"/>
    </location>
</feature>
<feature type="helix" evidence="14">
    <location>
        <begin position="691"/>
        <end position="713"/>
    </location>
</feature>